<keyword id="KW-0143">Chaperone</keyword>
<keyword id="KW-0963">Cytoplasm</keyword>
<keyword id="KW-1015">Disulfide bond</keyword>
<keyword id="KW-0676">Redox-active center</keyword>
<keyword id="KW-0862">Zinc</keyword>
<name>HSLO_STRA1</name>
<evidence type="ECO:0000255" key="1">
    <source>
        <dbReference type="HAMAP-Rule" id="MF_00117"/>
    </source>
</evidence>
<proteinExistence type="inferred from homology"/>
<comment type="function">
    <text evidence="1">Redox regulated molecular chaperone. Protects both thermally unfolding and oxidatively damaged proteins from irreversible aggregation. Plays an important role in the bacterial defense system toward oxidative stress.</text>
</comment>
<comment type="subcellular location">
    <subcellularLocation>
        <location evidence="1">Cytoplasm</location>
    </subcellularLocation>
</comment>
<comment type="PTM">
    <text evidence="1">Under oxidizing conditions two disulfide bonds are formed involving the reactive cysteines. Under reducing conditions zinc is bound to the reactive cysteines and the protein is inactive.</text>
</comment>
<comment type="similarity">
    <text evidence="1">Belongs to the HSP33 family.</text>
</comment>
<sequence length="291" mass="31902">MDKIIKSISTSGSFRAYVLDCTETVRTAQEKHQTLSSSTVALGRTLIANQILAANQKGNSKVTVKVIGDSSFGHIISVADTKGNVKGYIQNTGVDIKKTATGEVLVGPFMGNGHFVVITDYGTGQPYTSTTPLITGEIGEDFAYYLTESEQTPSAVGLNVLLDDEDKVKVAGGFMLQVLPGASDEEISRYEKRIQEMPSISSLLESENHIESLLSAIYGEDDYKRLSEDSLAFYCDCSKERFEAALLTLGTKELQAMKDEDKGVEITCQFCNQTYYFTEEDLEKIINDSIK</sequence>
<dbReference type="EMBL" id="CP000114">
    <property type="protein sequence ID" value="ABA44622.1"/>
    <property type="molecule type" value="Genomic_DNA"/>
</dbReference>
<dbReference type="RefSeq" id="WP_000357828.1">
    <property type="nucleotide sequence ID" value="NC_007432.1"/>
</dbReference>
<dbReference type="SMR" id="Q3JZ62"/>
<dbReference type="GeneID" id="66886661"/>
<dbReference type="KEGG" id="sak:SAK_1844"/>
<dbReference type="HOGENOM" id="CLU_054493_1_0_9"/>
<dbReference type="GO" id="GO:0005737">
    <property type="term" value="C:cytoplasm"/>
    <property type="evidence" value="ECO:0007669"/>
    <property type="project" value="UniProtKB-SubCell"/>
</dbReference>
<dbReference type="GO" id="GO:0044183">
    <property type="term" value="F:protein folding chaperone"/>
    <property type="evidence" value="ECO:0007669"/>
    <property type="project" value="TreeGrafter"/>
</dbReference>
<dbReference type="GO" id="GO:0051082">
    <property type="term" value="F:unfolded protein binding"/>
    <property type="evidence" value="ECO:0007669"/>
    <property type="project" value="UniProtKB-UniRule"/>
</dbReference>
<dbReference type="GO" id="GO:0042026">
    <property type="term" value="P:protein refolding"/>
    <property type="evidence" value="ECO:0007669"/>
    <property type="project" value="TreeGrafter"/>
</dbReference>
<dbReference type="CDD" id="cd00498">
    <property type="entry name" value="Hsp33"/>
    <property type="match status" value="1"/>
</dbReference>
<dbReference type="Gene3D" id="3.55.30.10">
    <property type="entry name" value="Hsp33 domain"/>
    <property type="match status" value="1"/>
</dbReference>
<dbReference type="Gene3D" id="3.90.1280.10">
    <property type="entry name" value="HSP33 redox switch-like"/>
    <property type="match status" value="1"/>
</dbReference>
<dbReference type="HAMAP" id="MF_00117">
    <property type="entry name" value="HslO"/>
    <property type="match status" value="1"/>
</dbReference>
<dbReference type="InterPro" id="IPR000397">
    <property type="entry name" value="Heat_shock_Hsp33"/>
</dbReference>
<dbReference type="InterPro" id="IPR016154">
    <property type="entry name" value="Heat_shock_Hsp33_C"/>
</dbReference>
<dbReference type="InterPro" id="IPR016153">
    <property type="entry name" value="Heat_shock_Hsp33_N"/>
</dbReference>
<dbReference type="NCBIfam" id="NF001033">
    <property type="entry name" value="PRK00114.1"/>
    <property type="match status" value="1"/>
</dbReference>
<dbReference type="PANTHER" id="PTHR30111">
    <property type="entry name" value="33 KDA CHAPERONIN"/>
    <property type="match status" value="1"/>
</dbReference>
<dbReference type="PANTHER" id="PTHR30111:SF1">
    <property type="entry name" value="33 KDA CHAPERONIN"/>
    <property type="match status" value="1"/>
</dbReference>
<dbReference type="Pfam" id="PF01430">
    <property type="entry name" value="HSP33"/>
    <property type="match status" value="1"/>
</dbReference>
<dbReference type="PIRSF" id="PIRSF005261">
    <property type="entry name" value="Heat_shock_Hsp33"/>
    <property type="match status" value="1"/>
</dbReference>
<dbReference type="SUPFAM" id="SSF64397">
    <property type="entry name" value="Hsp33 domain"/>
    <property type="match status" value="1"/>
</dbReference>
<dbReference type="SUPFAM" id="SSF118352">
    <property type="entry name" value="HSP33 redox switch-like"/>
    <property type="match status" value="1"/>
</dbReference>
<reference key="1">
    <citation type="journal article" date="2005" name="Proc. Natl. Acad. Sci. U.S.A.">
        <title>Genome analysis of multiple pathogenic isolates of Streptococcus agalactiae: implications for the microbial 'pan-genome'.</title>
        <authorList>
            <person name="Tettelin H."/>
            <person name="Masignani V."/>
            <person name="Cieslewicz M.J."/>
            <person name="Donati C."/>
            <person name="Medini D."/>
            <person name="Ward N.L."/>
            <person name="Angiuoli S.V."/>
            <person name="Crabtree J."/>
            <person name="Jones A.L."/>
            <person name="Durkin A.S."/>
            <person name="DeBoy R.T."/>
            <person name="Davidsen T.M."/>
            <person name="Mora M."/>
            <person name="Scarselli M."/>
            <person name="Margarit y Ros I."/>
            <person name="Peterson J.D."/>
            <person name="Hauser C.R."/>
            <person name="Sundaram J.P."/>
            <person name="Nelson W.C."/>
            <person name="Madupu R."/>
            <person name="Brinkac L.M."/>
            <person name="Dodson R.J."/>
            <person name="Rosovitz M.J."/>
            <person name="Sullivan S.A."/>
            <person name="Daugherty S.C."/>
            <person name="Haft D.H."/>
            <person name="Selengut J."/>
            <person name="Gwinn M.L."/>
            <person name="Zhou L."/>
            <person name="Zafar N."/>
            <person name="Khouri H."/>
            <person name="Radune D."/>
            <person name="Dimitrov G."/>
            <person name="Watkins K."/>
            <person name="O'Connor K.J."/>
            <person name="Smith S."/>
            <person name="Utterback T.R."/>
            <person name="White O."/>
            <person name="Rubens C.E."/>
            <person name="Grandi G."/>
            <person name="Madoff L.C."/>
            <person name="Kasper D.L."/>
            <person name="Telford J.L."/>
            <person name="Wessels M.R."/>
            <person name="Rappuoli R."/>
            <person name="Fraser C.M."/>
        </authorList>
    </citation>
    <scope>NUCLEOTIDE SEQUENCE [LARGE SCALE GENOMIC DNA]</scope>
    <source>
        <strain>ATCC 27591 / A909 / CDC SS700</strain>
    </source>
</reference>
<feature type="chain" id="PRO_0000238097" description="33 kDa chaperonin">
    <location>
        <begin position="1"/>
        <end position="291"/>
    </location>
</feature>
<feature type="disulfide bond" description="Redox-active" evidence="1">
    <location>
        <begin position="235"/>
        <end position="237"/>
    </location>
</feature>
<feature type="disulfide bond" description="Redox-active" evidence="1">
    <location>
        <begin position="268"/>
        <end position="271"/>
    </location>
</feature>
<protein>
    <recommendedName>
        <fullName evidence="1">33 kDa chaperonin</fullName>
    </recommendedName>
    <alternativeName>
        <fullName evidence="1">Heat shock protein 33 homolog</fullName>
        <shortName evidence="1">HSP33</shortName>
    </alternativeName>
</protein>
<gene>
    <name evidence="1" type="primary">hslO</name>
    <name type="ordered locus">SAK_1844</name>
</gene>
<organism>
    <name type="scientific">Streptococcus agalactiae serotype Ia (strain ATCC 27591 / A909 / CDC SS700)</name>
    <dbReference type="NCBI Taxonomy" id="205921"/>
    <lineage>
        <taxon>Bacteria</taxon>
        <taxon>Bacillati</taxon>
        <taxon>Bacillota</taxon>
        <taxon>Bacilli</taxon>
        <taxon>Lactobacillales</taxon>
        <taxon>Streptococcaceae</taxon>
        <taxon>Streptococcus</taxon>
    </lineage>
</organism>
<accession>Q3JZ62</accession>